<dbReference type="EC" id="3.1.-.-" evidence="1"/>
<dbReference type="EMBL" id="CP000282">
    <property type="protein sequence ID" value="ABD82557.1"/>
    <property type="molecule type" value="Genomic_DNA"/>
</dbReference>
<dbReference type="RefSeq" id="WP_011469773.1">
    <property type="nucleotide sequence ID" value="NC_007912.1"/>
</dbReference>
<dbReference type="SMR" id="Q21FH2"/>
<dbReference type="STRING" id="203122.Sde_3302"/>
<dbReference type="GeneID" id="98614923"/>
<dbReference type="KEGG" id="sde:Sde_3302"/>
<dbReference type="eggNOG" id="COG0319">
    <property type="taxonomic scope" value="Bacteria"/>
</dbReference>
<dbReference type="HOGENOM" id="CLU_106710_0_1_6"/>
<dbReference type="OrthoDB" id="9807740at2"/>
<dbReference type="Proteomes" id="UP000001947">
    <property type="component" value="Chromosome"/>
</dbReference>
<dbReference type="GO" id="GO:0005737">
    <property type="term" value="C:cytoplasm"/>
    <property type="evidence" value="ECO:0007669"/>
    <property type="project" value="UniProtKB-SubCell"/>
</dbReference>
<dbReference type="GO" id="GO:0004222">
    <property type="term" value="F:metalloendopeptidase activity"/>
    <property type="evidence" value="ECO:0007669"/>
    <property type="project" value="InterPro"/>
</dbReference>
<dbReference type="GO" id="GO:0004521">
    <property type="term" value="F:RNA endonuclease activity"/>
    <property type="evidence" value="ECO:0007669"/>
    <property type="project" value="UniProtKB-UniRule"/>
</dbReference>
<dbReference type="GO" id="GO:0008270">
    <property type="term" value="F:zinc ion binding"/>
    <property type="evidence" value="ECO:0007669"/>
    <property type="project" value="UniProtKB-UniRule"/>
</dbReference>
<dbReference type="GO" id="GO:0006364">
    <property type="term" value="P:rRNA processing"/>
    <property type="evidence" value="ECO:0007669"/>
    <property type="project" value="UniProtKB-UniRule"/>
</dbReference>
<dbReference type="Gene3D" id="3.40.390.30">
    <property type="entry name" value="Metalloproteases ('zincins'), catalytic domain"/>
    <property type="match status" value="1"/>
</dbReference>
<dbReference type="HAMAP" id="MF_00009">
    <property type="entry name" value="Endoribonucl_YbeY"/>
    <property type="match status" value="1"/>
</dbReference>
<dbReference type="InterPro" id="IPR023091">
    <property type="entry name" value="MetalPrtase_cat_dom_sf_prd"/>
</dbReference>
<dbReference type="InterPro" id="IPR002036">
    <property type="entry name" value="YbeY"/>
</dbReference>
<dbReference type="InterPro" id="IPR020549">
    <property type="entry name" value="YbeY_CS"/>
</dbReference>
<dbReference type="NCBIfam" id="TIGR00043">
    <property type="entry name" value="rRNA maturation RNase YbeY"/>
    <property type="match status" value="1"/>
</dbReference>
<dbReference type="PANTHER" id="PTHR46986">
    <property type="entry name" value="ENDORIBONUCLEASE YBEY, CHLOROPLASTIC"/>
    <property type="match status" value="1"/>
</dbReference>
<dbReference type="PANTHER" id="PTHR46986:SF1">
    <property type="entry name" value="ENDORIBONUCLEASE YBEY, CHLOROPLASTIC"/>
    <property type="match status" value="1"/>
</dbReference>
<dbReference type="Pfam" id="PF02130">
    <property type="entry name" value="YbeY"/>
    <property type="match status" value="1"/>
</dbReference>
<dbReference type="SUPFAM" id="SSF55486">
    <property type="entry name" value="Metalloproteases ('zincins'), catalytic domain"/>
    <property type="match status" value="1"/>
</dbReference>
<dbReference type="PROSITE" id="PS01306">
    <property type="entry name" value="UPF0054"/>
    <property type="match status" value="1"/>
</dbReference>
<comment type="function">
    <text evidence="1">Single strand-specific metallo-endoribonuclease involved in late-stage 70S ribosome quality control and in maturation of the 3' terminus of the 16S rRNA.</text>
</comment>
<comment type="cofactor">
    <cofactor evidence="1">
        <name>Zn(2+)</name>
        <dbReference type="ChEBI" id="CHEBI:29105"/>
    </cofactor>
    <text evidence="1">Binds 1 zinc ion.</text>
</comment>
<comment type="subcellular location">
    <subcellularLocation>
        <location evidence="1">Cytoplasm</location>
    </subcellularLocation>
</comment>
<comment type="similarity">
    <text evidence="1">Belongs to the endoribonuclease YbeY family.</text>
</comment>
<keyword id="KW-0963">Cytoplasm</keyword>
<keyword id="KW-0255">Endonuclease</keyword>
<keyword id="KW-0378">Hydrolase</keyword>
<keyword id="KW-0479">Metal-binding</keyword>
<keyword id="KW-0540">Nuclease</keyword>
<keyword id="KW-1185">Reference proteome</keyword>
<keyword id="KW-0690">Ribosome biogenesis</keyword>
<keyword id="KW-0698">rRNA processing</keyword>
<keyword id="KW-0862">Zinc</keyword>
<protein>
    <recommendedName>
        <fullName evidence="1">Endoribonuclease YbeY</fullName>
        <ecNumber evidence="1">3.1.-.-</ecNumber>
    </recommendedName>
</protein>
<accession>Q21FH2</accession>
<name>YBEY_SACD2</name>
<feature type="chain" id="PRO_0000284300" description="Endoribonuclease YbeY">
    <location>
        <begin position="1"/>
        <end position="149"/>
    </location>
</feature>
<feature type="binding site" evidence="1">
    <location>
        <position position="113"/>
    </location>
    <ligand>
        <name>Zn(2+)</name>
        <dbReference type="ChEBI" id="CHEBI:29105"/>
        <note>catalytic</note>
    </ligand>
</feature>
<feature type="binding site" evidence="1">
    <location>
        <position position="117"/>
    </location>
    <ligand>
        <name>Zn(2+)</name>
        <dbReference type="ChEBI" id="CHEBI:29105"/>
        <note>catalytic</note>
    </ligand>
</feature>
<feature type="binding site" evidence="1">
    <location>
        <position position="123"/>
    </location>
    <ligand>
        <name>Zn(2+)</name>
        <dbReference type="ChEBI" id="CHEBI:29105"/>
        <note>catalytic</note>
    </ligand>
</feature>
<sequence>MLTIDIQQASTADASQLPSDKQFEIWVEAALQQRMNEAELSIRIVDEDESQALNLQYRGKDKSTNVLSFPCELPDGVELPLLGDLVICAQVVAKEALEQGKLLHAHWAHMVVHGTLHLLGYDHIEDGEAEEMEAIEIQVLLELGYPNPY</sequence>
<proteinExistence type="inferred from homology"/>
<organism>
    <name type="scientific">Saccharophagus degradans (strain 2-40 / ATCC 43961 / DSM 17024)</name>
    <dbReference type="NCBI Taxonomy" id="203122"/>
    <lineage>
        <taxon>Bacteria</taxon>
        <taxon>Pseudomonadati</taxon>
        <taxon>Pseudomonadota</taxon>
        <taxon>Gammaproteobacteria</taxon>
        <taxon>Cellvibrionales</taxon>
        <taxon>Cellvibrionaceae</taxon>
        <taxon>Saccharophagus</taxon>
    </lineage>
</organism>
<evidence type="ECO:0000255" key="1">
    <source>
        <dbReference type="HAMAP-Rule" id="MF_00009"/>
    </source>
</evidence>
<gene>
    <name evidence="1" type="primary">ybeY</name>
    <name type="ordered locus">Sde_3302</name>
</gene>
<reference key="1">
    <citation type="journal article" date="2008" name="PLoS Genet.">
        <title>Complete genome sequence of the complex carbohydrate-degrading marine bacterium, Saccharophagus degradans strain 2-40 T.</title>
        <authorList>
            <person name="Weiner R.M."/>
            <person name="Taylor L.E. II"/>
            <person name="Henrissat B."/>
            <person name="Hauser L."/>
            <person name="Land M."/>
            <person name="Coutinho P.M."/>
            <person name="Rancurel C."/>
            <person name="Saunders E.H."/>
            <person name="Longmire A.G."/>
            <person name="Zhang H."/>
            <person name="Bayer E.A."/>
            <person name="Gilbert H.J."/>
            <person name="Larimer F."/>
            <person name="Zhulin I.B."/>
            <person name="Ekborg N.A."/>
            <person name="Lamed R."/>
            <person name="Richardson P.M."/>
            <person name="Borovok I."/>
            <person name="Hutcheson S."/>
        </authorList>
    </citation>
    <scope>NUCLEOTIDE SEQUENCE [LARGE SCALE GENOMIC DNA]</scope>
    <source>
        <strain>2-40 / ATCC 43961 / DSM 17024</strain>
    </source>
</reference>